<proteinExistence type="inferred from homology"/>
<reference key="1">
    <citation type="journal article" date="2007" name="Plant Cell">
        <title>Dothideomycete-plant interactions illuminated by genome sequencing and EST analysis of the wheat pathogen Stagonospora nodorum.</title>
        <authorList>
            <person name="Hane J.K."/>
            <person name="Lowe R.G.T."/>
            <person name="Solomon P.S."/>
            <person name="Tan K.-C."/>
            <person name="Schoch C.L."/>
            <person name="Spatafora J.W."/>
            <person name="Crous P.W."/>
            <person name="Kodira C.D."/>
            <person name="Birren B.W."/>
            <person name="Galagan J.E."/>
            <person name="Torriani S.F.F."/>
            <person name="McDonald B.A."/>
            <person name="Oliver R.P."/>
        </authorList>
    </citation>
    <scope>NUCLEOTIDE SEQUENCE [LARGE SCALE GENOMIC DNA]</scope>
    <source>
        <strain>SN15 / ATCC MYA-4574 / FGSC 10173</strain>
    </source>
</reference>
<sequence>MADALKDVPFKTVQVDALVAIKIATASGKAFPSLATGSLVGMEKNGVLEITNSFPYPEINTASADGQNDTAANLSAAAPRAKQNIAYGNEMIKFLREVNVDANNVGWYTSTSMGNFVNLNTIENQFYYQSQLNERTVALIYDVSRSSQGTLNLRAYRLSPSFVTAYKEGKFTTESLQKSSLRYQDILVELPVTVHNSHLLTSLLHQLPSEAPKEELSFPPNLAALQQDPNTPLPPLFPNYDALDLSIDPFLEKTCDLLLESIENHHTELNNYQYYQRQLAREQTKITAWQQKRKAENAARTASKQPLLPEDEWQRLFKLPAEPSRLETLLNSRQVEQYSRQVDGFAAGVTSKMFAVKSNLLPGE</sequence>
<dbReference type="EMBL" id="CH445334">
    <property type="protein sequence ID" value="EAT85603.2"/>
    <property type="status" value="ALT_SEQ"/>
    <property type="molecule type" value="Genomic_DNA"/>
</dbReference>
<dbReference type="RefSeq" id="XP_001797309.1">
    <property type="nucleotide sequence ID" value="XM_001797257.1"/>
</dbReference>
<dbReference type="SMR" id="Q0UMR2"/>
<dbReference type="STRING" id="321614.Q0UMR2"/>
<dbReference type="GeneID" id="5974199"/>
<dbReference type="KEGG" id="pno:SNOG_06952"/>
<dbReference type="VEuPathDB" id="FungiDB:JI435_304910"/>
<dbReference type="eggNOG" id="KOG1560">
    <property type="taxonomic scope" value="Eukaryota"/>
</dbReference>
<dbReference type="eggNOG" id="KOG3752">
    <property type="taxonomic scope" value="Eukaryota"/>
</dbReference>
<dbReference type="InParanoid" id="Q0UMR2"/>
<dbReference type="OMA" id="WYQSTYF"/>
<dbReference type="OrthoDB" id="10265695at2759"/>
<dbReference type="Proteomes" id="UP000001055">
    <property type="component" value="Unassembled WGS sequence"/>
</dbReference>
<dbReference type="GO" id="GO:0016282">
    <property type="term" value="C:eukaryotic 43S preinitiation complex"/>
    <property type="evidence" value="ECO:0000318"/>
    <property type="project" value="GO_Central"/>
</dbReference>
<dbReference type="GO" id="GO:0033290">
    <property type="term" value="C:eukaryotic 48S preinitiation complex"/>
    <property type="evidence" value="ECO:0007669"/>
    <property type="project" value="UniProtKB-UniRule"/>
</dbReference>
<dbReference type="GO" id="GO:0005852">
    <property type="term" value="C:eukaryotic translation initiation factor 3 complex"/>
    <property type="evidence" value="ECO:0000318"/>
    <property type="project" value="GO_Central"/>
</dbReference>
<dbReference type="GO" id="GO:0008237">
    <property type="term" value="F:metallopeptidase activity"/>
    <property type="evidence" value="ECO:0000318"/>
    <property type="project" value="GO_Central"/>
</dbReference>
<dbReference type="GO" id="GO:0003743">
    <property type="term" value="F:translation initiation factor activity"/>
    <property type="evidence" value="ECO:0007669"/>
    <property type="project" value="UniProtKB-UniRule"/>
</dbReference>
<dbReference type="GO" id="GO:0001732">
    <property type="term" value="P:formation of cytoplasmic translation initiation complex"/>
    <property type="evidence" value="ECO:0007669"/>
    <property type="project" value="UniProtKB-UniRule"/>
</dbReference>
<dbReference type="GO" id="GO:0006413">
    <property type="term" value="P:translational initiation"/>
    <property type="evidence" value="ECO:0000318"/>
    <property type="project" value="GO_Central"/>
</dbReference>
<dbReference type="CDD" id="cd08065">
    <property type="entry name" value="MPN_eIF3h"/>
    <property type="match status" value="1"/>
</dbReference>
<dbReference type="FunFam" id="3.40.140.10:FF:000052">
    <property type="entry name" value="Eukaryotic translation initiation factor 3 subunit H"/>
    <property type="match status" value="1"/>
</dbReference>
<dbReference type="Gene3D" id="3.40.140.10">
    <property type="entry name" value="Cytidine Deaminase, domain 2"/>
    <property type="match status" value="1"/>
</dbReference>
<dbReference type="HAMAP" id="MF_03007">
    <property type="entry name" value="eIF3h"/>
    <property type="match status" value="1"/>
</dbReference>
<dbReference type="InterPro" id="IPR027524">
    <property type="entry name" value="eIF3h"/>
</dbReference>
<dbReference type="InterPro" id="IPR045810">
    <property type="entry name" value="eIF3h_C"/>
</dbReference>
<dbReference type="InterPro" id="IPR000555">
    <property type="entry name" value="JAMM/MPN+_dom"/>
</dbReference>
<dbReference type="InterPro" id="IPR050242">
    <property type="entry name" value="JAMM_MPN+_peptidase_M67A"/>
</dbReference>
<dbReference type="InterPro" id="IPR037518">
    <property type="entry name" value="MPN"/>
</dbReference>
<dbReference type="PANTHER" id="PTHR10410">
    <property type="entry name" value="EUKARYOTIC TRANSLATION INITIATION FACTOR 3 -RELATED"/>
    <property type="match status" value="1"/>
</dbReference>
<dbReference type="Pfam" id="PF19445">
    <property type="entry name" value="eIF3h_C"/>
    <property type="match status" value="2"/>
</dbReference>
<dbReference type="Pfam" id="PF01398">
    <property type="entry name" value="JAB"/>
    <property type="match status" value="1"/>
</dbReference>
<dbReference type="PROSITE" id="PS50249">
    <property type="entry name" value="MPN"/>
    <property type="match status" value="1"/>
</dbReference>
<accession>Q0UMR2</accession>
<protein>
    <recommendedName>
        <fullName evidence="1">Eukaryotic translation initiation factor 3 subunit H</fullName>
        <shortName evidence="1">eIF3h</shortName>
    </recommendedName>
</protein>
<organism>
    <name type="scientific">Phaeosphaeria nodorum (strain SN15 / ATCC MYA-4574 / FGSC 10173)</name>
    <name type="common">Glume blotch fungus</name>
    <name type="synonym">Parastagonospora nodorum</name>
    <dbReference type="NCBI Taxonomy" id="321614"/>
    <lineage>
        <taxon>Eukaryota</taxon>
        <taxon>Fungi</taxon>
        <taxon>Dikarya</taxon>
        <taxon>Ascomycota</taxon>
        <taxon>Pezizomycotina</taxon>
        <taxon>Dothideomycetes</taxon>
        <taxon>Pleosporomycetidae</taxon>
        <taxon>Pleosporales</taxon>
        <taxon>Pleosporineae</taxon>
        <taxon>Phaeosphaeriaceae</taxon>
        <taxon>Parastagonospora</taxon>
    </lineage>
</organism>
<comment type="function">
    <text evidence="1">Component of the eukaryotic translation initiation factor 3 (eIF-3) complex, which is involved in protein synthesis of a specialized repertoire of mRNAs and, together with other initiation factors, stimulates binding of mRNA and methionyl-tRNAi to the 40S ribosome. The eIF-3 complex specifically targets and initiates translation of a subset of mRNAs involved in cell proliferation.</text>
</comment>
<comment type="subunit">
    <text evidence="1">Component of the eukaryotic translation initiation factor 3 (eIF-3) complex.</text>
</comment>
<comment type="subcellular location">
    <subcellularLocation>
        <location evidence="1">Cytoplasm</location>
    </subcellularLocation>
</comment>
<comment type="similarity">
    <text evidence="1">Belongs to the eIF-3 subunit H family.</text>
</comment>
<comment type="sequence caution" evidence="3">
    <conflict type="erroneous gene model prediction">
        <sequence resource="EMBL-CDS" id="EAT85603"/>
    </conflict>
</comment>
<evidence type="ECO:0000255" key="1">
    <source>
        <dbReference type="HAMAP-Rule" id="MF_03007"/>
    </source>
</evidence>
<evidence type="ECO:0000255" key="2">
    <source>
        <dbReference type="PROSITE-ProRule" id="PRU01182"/>
    </source>
</evidence>
<evidence type="ECO:0000305" key="3"/>
<name>EIF3H_PHANO</name>
<feature type="chain" id="PRO_0000365211" description="Eukaryotic translation initiation factor 3 subunit H">
    <location>
        <begin position="1"/>
        <end position="364"/>
    </location>
</feature>
<feature type="domain" description="MPN" evidence="2">
    <location>
        <begin position="13"/>
        <end position="162"/>
    </location>
</feature>
<gene>
    <name type="ORF">SNOG_06952</name>
</gene>
<keyword id="KW-0963">Cytoplasm</keyword>
<keyword id="KW-0396">Initiation factor</keyword>
<keyword id="KW-0648">Protein biosynthesis</keyword>